<gene>
    <name type="primary">Hes2</name>
</gene>
<keyword id="KW-0238">DNA-binding</keyword>
<keyword id="KW-0539">Nucleus</keyword>
<keyword id="KW-1185">Reference proteome</keyword>
<keyword id="KW-0678">Repressor</keyword>
<keyword id="KW-0804">Transcription</keyword>
<keyword id="KW-0805">Transcription regulation</keyword>
<name>HES2_MOUSE</name>
<accession>O54792</accession>
<accession>Q8BKA6</accession>
<organism>
    <name type="scientific">Mus musculus</name>
    <name type="common">Mouse</name>
    <dbReference type="NCBI Taxonomy" id="10090"/>
    <lineage>
        <taxon>Eukaryota</taxon>
        <taxon>Metazoa</taxon>
        <taxon>Chordata</taxon>
        <taxon>Craniata</taxon>
        <taxon>Vertebrata</taxon>
        <taxon>Euteleostomi</taxon>
        <taxon>Mammalia</taxon>
        <taxon>Eutheria</taxon>
        <taxon>Euarchontoglires</taxon>
        <taxon>Glires</taxon>
        <taxon>Rodentia</taxon>
        <taxon>Myomorpha</taxon>
        <taxon>Muroidea</taxon>
        <taxon>Muridae</taxon>
        <taxon>Murinae</taxon>
        <taxon>Mus</taxon>
        <taxon>Mus</taxon>
    </lineage>
</organism>
<evidence type="ECO:0000250" key="1"/>
<evidence type="ECO:0000255" key="2">
    <source>
        <dbReference type="PROSITE-ProRule" id="PRU00380"/>
    </source>
</evidence>
<evidence type="ECO:0000255" key="3">
    <source>
        <dbReference type="PROSITE-ProRule" id="PRU00981"/>
    </source>
</evidence>
<evidence type="ECO:0000256" key="4">
    <source>
        <dbReference type="SAM" id="MobiDB-lite"/>
    </source>
</evidence>
<evidence type="ECO:0000305" key="5"/>
<comment type="function">
    <text>Transcriptional repressor of genes that require a bHLH protein for their transcription.</text>
</comment>
<comment type="subunit">
    <text evidence="1">Transcription repression requires formation of a complex with a corepressor protein of the Groucho/TLE family.</text>
</comment>
<comment type="subcellular location">
    <subcellularLocation>
        <location>Nucleus</location>
    </subcellularLocation>
</comment>
<comment type="domain">
    <text>Has a particular type of basic domain (presence of a helix-interrupting proline) that binds to the N-box (CACNAG), rather than the canonical E-box (CANNTG).</text>
</comment>
<comment type="domain">
    <text evidence="1">The C-terminal WRPW motif is a transcriptional repression domain necessary for the interaction with Groucho/TLE family members, transcriptional corepressors recruited to specific target DNA by Hairy-related proteins.</text>
</comment>
<sequence>MRLPRRVEDAAELRKNLKPLLEKRRRARINESLSQLKGLVLPLLGAETSRSSKLEKADILEMTVRFLQEQPATLYSSAAPGPLNSYLEGYRACLARLARVLPACSVLEPAVSARLLEHLRQRTVSDDSPSLTLPPAPAPAPSPPVPPPGSSGLWRPW</sequence>
<protein>
    <recommendedName>
        <fullName>Transcription factor HES-2</fullName>
    </recommendedName>
    <alternativeName>
        <fullName>Hairy and enhancer of split 2</fullName>
    </alternativeName>
</protein>
<proteinExistence type="evidence at transcript level"/>
<dbReference type="EMBL" id="AB009967">
    <property type="protein sequence ID" value="BAA24091.1"/>
    <property type="molecule type" value="Genomic_DNA"/>
</dbReference>
<dbReference type="EMBL" id="AK053792">
    <property type="protein sequence ID" value="BAC35525.1"/>
    <property type="molecule type" value="mRNA"/>
</dbReference>
<dbReference type="EMBL" id="AL772240">
    <property type="status" value="NOT_ANNOTATED_CDS"/>
    <property type="molecule type" value="Genomic_DNA"/>
</dbReference>
<dbReference type="EMBL" id="CH466594">
    <property type="protein sequence ID" value="EDL14928.1"/>
    <property type="molecule type" value="Genomic_DNA"/>
</dbReference>
<dbReference type="EMBL" id="BC138112">
    <property type="protein sequence ID" value="AAI38113.1"/>
    <property type="molecule type" value="mRNA"/>
</dbReference>
<dbReference type="CCDS" id="CCDS18995.1"/>
<dbReference type="RefSeq" id="NP_001288734.1">
    <property type="nucleotide sequence ID" value="NM_001301805.1"/>
</dbReference>
<dbReference type="RefSeq" id="NP_032262.2">
    <property type="nucleotide sequence ID" value="NM_008236.4"/>
</dbReference>
<dbReference type="RefSeq" id="XP_017175471.1">
    <property type="nucleotide sequence ID" value="XM_017319982.2"/>
</dbReference>
<dbReference type="SMR" id="O54792"/>
<dbReference type="ELM" id="O54792"/>
<dbReference type="FunCoup" id="O54792">
    <property type="interactions" value="1103"/>
</dbReference>
<dbReference type="STRING" id="10090.ENSMUSP00000030782"/>
<dbReference type="iPTMnet" id="O54792"/>
<dbReference type="PhosphoSitePlus" id="O54792"/>
<dbReference type="PaxDb" id="10090-ENSMUSP00000030782"/>
<dbReference type="ProteomicsDB" id="269827"/>
<dbReference type="Antibodypedia" id="27325">
    <property type="antibodies" value="287 antibodies from 22 providers"/>
</dbReference>
<dbReference type="DNASU" id="15206"/>
<dbReference type="Ensembl" id="ENSMUST00000030782.2">
    <property type="protein sequence ID" value="ENSMUSP00000030782.2"/>
    <property type="gene ID" value="ENSMUSG00000028940.3"/>
</dbReference>
<dbReference type="GeneID" id="15206"/>
<dbReference type="KEGG" id="mmu:15206"/>
<dbReference type="UCSC" id="uc008vzw.1">
    <property type="organism name" value="mouse"/>
</dbReference>
<dbReference type="AGR" id="MGI:1098624"/>
<dbReference type="CTD" id="54626"/>
<dbReference type="MGI" id="MGI:1098624">
    <property type="gene designation" value="Hes2"/>
</dbReference>
<dbReference type="VEuPathDB" id="HostDB:ENSMUSG00000028940"/>
<dbReference type="eggNOG" id="KOG4304">
    <property type="taxonomic scope" value="Eukaryota"/>
</dbReference>
<dbReference type="GeneTree" id="ENSGT00940000161602"/>
<dbReference type="HOGENOM" id="CLU_068550_5_0_1"/>
<dbReference type="InParanoid" id="O54792"/>
<dbReference type="OMA" id="NSTGPMW"/>
<dbReference type="OrthoDB" id="6085656at2759"/>
<dbReference type="PhylomeDB" id="O54792"/>
<dbReference type="TreeFam" id="TF351373"/>
<dbReference type="BioGRID-ORCS" id="15206">
    <property type="hits" value="2 hits in 80 CRISPR screens"/>
</dbReference>
<dbReference type="PRO" id="PR:O54792"/>
<dbReference type="Proteomes" id="UP000000589">
    <property type="component" value="Chromosome 4"/>
</dbReference>
<dbReference type="RNAct" id="O54792">
    <property type="molecule type" value="protein"/>
</dbReference>
<dbReference type="Bgee" id="ENSMUSG00000028940">
    <property type="expression patterns" value="Expressed in ureteric bud trunk and 31 other cell types or tissues"/>
</dbReference>
<dbReference type="GO" id="GO:0005634">
    <property type="term" value="C:nucleus"/>
    <property type="evidence" value="ECO:0007669"/>
    <property type="project" value="UniProtKB-SubCell"/>
</dbReference>
<dbReference type="GO" id="GO:0001227">
    <property type="term" value="F:DNA-binding transcription repressor activity, RNA polymerase II-specific"/>
    <property type="evidence" value="ECO:0007669"/>
    <property type="project" value="Ensembl"/>
</dbReference>
<dbReference type="GO" id="GO:0046983">
    <property type="term" value="F:protein dimerization activity"/>
    <property type="evidence" value="ECO:0007669"/>
    <property type="project" value="InterPro"/>
</dbReference>
<dbReference type="GO" id="GO:0000978">
    <property type="term" value="F:RNA polymerase II cis-regulatory region sequence-specific DNA binding"/>
    <property type="evidence" value="ECO:0007669"/>
    <property type="project" value="Ensembl"/>
</dbReference>
<dbReference type="FunFam" id="4.10.280.10:FF:000009">
    <property type="entry name" value="Transcription factor HES-1"/>
    <property type="match status" value="1"/>
</dbReference>
<dbReference type="Gene3D" id="4.10.280.10">
    <property type="entry name" value="Helix-loop-helix DNA-binding domain"/>
    <property type="match status" value="1"/>
</dbReference>
<dbReference type="InterPro" id="IPR011598">
    <property type="entry name" value="bHLH_dom"/>
</dbReference>
<dbReference type="InterPro" id="IPR050370">
    <property type="entry name" value="HES_HEY"/>
</dbReference>
<dbReference type="InterPro" id="IPR036638">
    <property type="entry name" value="HLH_DNA-bd_sf"/>
</dbReference>
<dbReference type="InterPro" id="IPR003650">
    <property type="entry name" value="Orange_dom"/>
</dbReference>
<dbReference type="PANTHER" id="PTHR10985">
    <property type="entry name" value="BASIC HELIX-LOOP-HELIX TRANSCRIPTION FACTOR, HES-RELATED"/>
    <property type="match status" value="1"/>
</dbReference>
<dbReference type="Pfam" id="PF07527">
    <property type="entry name" value="Hairy_orange"/>
    <property type="match status" value="1"/>
</dbReference>
<dbReference type="Pfam" id="PF00010">
    <property type="entry name" value="HLH"/>
    <property type="match status" value="1"/>
</dbReference>
<dbReference type="SMART" id="SM00353">
    <property type="entry name" value="HLH"/>
    <property type="match status" value="1"/>
</dbReference>
<dbReference type="SMART" id="SM00511">
    <property type="entry name" value="ORANGE"/>
    <property type="match status" value="1"/>
</dbReference>
<dbReference type="SUPFAM" id="SSF47459">
    <property type="entry name" value="HLH, helix-loop-helix DNA-binding domain"/>
    <property type="match status" value="1"/>
</dbReference>
<dbReference type="SUPFAM" id="SSF158457">
    <property type="entry name" value="Orange domain-like"/>
    <property type="match status" value="1"/>
</dbReference>
<dbReference type="PROSITE" id="PS50888">
    <property type="entry name" value="BHLH"/>
    <property type="match status" value="1"/>
</dbReference>
<dbReference type="PROSITE" id="PS51054">
    <property type="entry name" value="ORANGE"/>
    <property type="match status" value="1"/>
</dbReference>
<reference key="1">
    <citation type="journal article" date="1998" name="Genomics">
        <title>Structure, chromosomal locus, and promoter of mouse Hes2 gene, a homologue of Drosophila hairy and Enhancer of split.</title>
        <authorList>
            <person name="Nishimura M."/>
            <person name="Isaka F."/>
            <person name="Ishibashi M."/>
            <person name="Tomita K."/>
            <person name="Tsuda H."/>
            <person name="Nakanishi S."/>
            <person name="Kageyama R."/>
        </authorList>
    </citation>
    <scope>NUCLEOTIDE SEQUENCE [GENOMIC DNA]</scope>
    <source>
        <strain>129/J</strain>
    </source>
</reference>
<reference key="2">
    <citation type="journal article" date="2005" name="Science">
        <title>The transcriptional landscape of the mammalian genome.</title>
        <authorList>
            <person name="Carninci P."/>
            <person name="Kasukawa T."/>
            <person name="Katayama S."/>
            <person name="Gough J."/>
            <person name="Frith M.C."/>
            <person name="Maeda N."/>
            <person name="Oyama R."/>
            <person name="Ravasi T."/>
            <person name="Lenhard B."/>
            <person name="Wells C."/>
            <person name="Kodzius R."/>
            <person name="Shimokawa K."/>
            <person name="Bajic V.B."/>
            <person name="Brenner S.E."/>
            <person name="Batalov S."/>
            <person name="Forrest A.R."/>
            <person name="Zavolan M."/>
            <person name="Davis M.J."/>
            <person name="Wilming L.G."/>
            <person name="Aidinis V."/>
            <person name="Allen J.E."/>
            <person name="Ambesi-Impiombato A."/>
            <person name="Apweiler R."/>
            <person name="Aturaliya R.N."/>
            <person name="Bailey T.L."/>
            <person name="Bansal M."/>
            <person name="Baxter L."/>
            <person name="Beisel K.W."/>
            <person name="Bersano T."/>
            <person name="Bono H."/>
            <person name="Chalk A.M."/>
            <person name="Chiu K.P."/>
            <person name="Choudhary V."/>
            <person name="Christoffels A."/>
            <person name="Clutterbuck D.R."/>
            <person name="Crowe M.L."/>
            <person name="Dalla E."/>
            <person name="Dalrymple B.P."/>
            <person name="de Bono B."/>
            <person name="Della Gatta G."/>
            <person name="di Bernardo D."/>
            <person name="Down T."/>
            <person name="Engstrom P."/>
            <person name="Fagiolini M."/>
            <person name="Faulkner G."/>
            <person name="Fletcher C.F."/>
            <person name="Fukushima T."/>
            <person name="Furuno M."/>
            <person name="Futaki S."/>
            <person name="Gariboldi M."/>
            <person name="Georgii-Hemming P."/>
            <person name="Gingeras T.R."/>
            <person name="Gojobori T."/>
            <person name="Green R.E."/>
            <person name="Gustincich S."/>
            <person name="Harbers M."/>
            <person name="Hayashi Y."/>
            <person name="Hensch T.K."/>
            <person name="Hirokawa N."/>
            <person name="Hill D."/>
            <person name="Huminiecki L."/>
            <person name="Iacono M."/>
            <person name="Ikeo K."/>
            <person name="Iwama A."/>
            <person name="Ishikawa T."/>
            <person name="Jakt M."/>
            <person name="Kanapin A."/>
            <person name="Katoh M."/>
            <person name="Kawasawa Y."/>
            <person name="Kelso J."/>
            <person name="Kitamura H."/>
            <person name="Kitano H."/>
            <person name="Kollias G."/>
            <person name="Krishnan S.P."/>
            <person name="Kruger A."/>
            <person name="Kummerfeld S.K."/>
            <person name="Kurochkin I.V."/>
            <person name="Lareau L.F."/>
            <person name="Lazarevic D."/>
            <person name="Lipovich L."/>
            <person name="Liu J."/>
            <person name="Liuni S."/>
            <person name="McWilliam S."/>
            <person name="Madan Babu M."/>
            <person name="Madera M."/>
            <person name="Marchionni L."/>
            <person name="Matsuda H."/>
            <person name="Matsuzawa S."/>
            <person name="Miki H."/>
            <person name="Mignone F."/>
            <person name="Miyake S."/>
            <person name="Morris K."/>
            <person name="Mottagui-Tabar S."/>
            <person name="Mulder N."/>
            <person name="Nakano N."/>
            <person name="Nakauchi H."/>
            <person name="Ng P."/>
            <person name="Nilsson R."/>
            <person name="Nishiguchi S."/>
            <person name="Nishikawa S."/>
            <person name="Nori F."/>
            <person name="Ohara O."/>
            <person name="Okazaki Y."/>
            <person name="Orlando V."/>
            <person name="Pang K.C."/>
            <person name="Pavan W.J."/>
            <person name="Pavesi G."/>
            <person name="Pesole G."/>
            <person name="Petrovsky N."/>
            <person name="Piazza S."/>
            <person name="Reed J."/>
            <person name="Reid J.F."/>
            <person name="Ring B.Z."/>
            <person name="Ringwald M."/>
            <person name="Rost B."/>
            <person name="Ruan Y."/>
            <person name="Salzberg S.L."/>
            <person name="Sandelin A."/>
            <person name="Schneider C."/>
            <person name="Schoenbach C."/>
            <person name="Sekiguchi K."/>
            <person name="Semple C.A."/>
            <person name="Seno S."/>
            <person name="Sessa L."/>
            <person name="Sheng Y."/>
            <person name="Shibata Y."/>
            <person name="Shimada H."/>
            <person name="Shimada K."/>
            <person name="Silva D."/>
            <person name="Sinclair B."/>
            <person name="Sperling S."/>
            <person name="Stupka E."/>
            <person name="Sugiura K."/>
            <person name="Sultana R."/>
            <person name="Takenaka Y."/>
            <person name="Taki K."/>
            <person name="Tammoja K."/>
            <person name="Tan S.L."/>
            <person name="Tang S."/>
            <person name="Taylor M.S."/>
            <person name="Tegner J."/>
            <person name="Teichmann S.A."/>
            <person name="Ueda H.R."/>
            <person name="van Nimwegen E."/>
            <person name="Verardo R."/>
            <person name="Wei C.L."/>
            <person name="Yagi K."/>
            <person name="Yamanishi H."/>
            <person name="Zabarovsky E."/>
            <person name="Zhu S."/>
            <person name="Zimmer A."/>
            <person name="Hide W."/>
            <person name="Bult C."/>
            <person name="Grimmond S.M."/>
            <person name="Teasdale R.D."/>
            <person name="Liu E.T."/>
            <person name="Brusic V."/>
            <person name="Quackenbush J."/>
            <person name="Wahlestedt C."/>
            <person name="Mattick J.S."/>
            <person name="Hume D.A."/>
            <person name="Kai C."/>
            <person name="Sasaki D."/>
            <person name="Tomaru Y."/>
            <person name="Fukuda S."/>
            <person name="Kanamori-Katayama M."/>
            <person name="Suzuki M."/>
            <person name="Aoki J."/>
            <person name="Arakawa T."/>
            <person name="Iida J."/>
            <person name="Imamura K."/>
            <person name="Itoh M."/>
            <person name="Kato T."/>
            <person name="Kawaji H."/>
            <person name="Kawagashira N."/>
            <person name="Kawashima T."/>
            <person name="Kojima M."/>
            <person name="Kondo S."/>
            <person name="Konno H."/>
            <person name="Nakano K."/>
            <person name="Ninomiya N."/>
            <person name="Nishio T."/>
            <person name="Okada M."/>
            <person name="Plessy C."/>
            <person name="Shibata K."/>
            <person name="Shiraki T."/>
            <person name="Suzuki S."/>
            <person name="Tagami M."/>
            <person name="Waki K."/>
            <person name="Watahiki A."/>
            <person name="Okamura-Oho Y."/>
            <person name="Suzuki H."/>
            <person name="Kawai J."/>
            <person name="Hayashizaki Y."/>
        </authorList>
    </citation>
    <scope>NUCLEOTIDE SEQUENCE [LARGE SCALE MRNA]</scope>
    <source>
        <strain>C57BL/6J</strain>
        <tissue>Eye</tissue>
    </source>
</reference>
<reference key="3">
    <citation type="journal article" date="2009" name="PLoS Biol.">
        <title>Lineage-specific biology revealed by a finished genome assembly of the mouse.</title>
        <authorList>
            <person name="Church D.M."/>
            <person name="Goodstadt L."/>
            <person name="Hillier L.W."/>
            <person name="Zody M.C."/>
            <person name="Goldstein S."/>
            <person name="She X."/>
            <person name="Bult C.J."/>
            <person name="Agarwala R."/>
            <person name="Cherry J.L."/>
            <person name="DiCuccio M."/>
            <person name="Hlavina W."/>
            <person name="Kapustin Y."/>
            <person name="Meric P."/>
            <person name="Maglott D."/>
            <person name="Birtle Z."/>
            <person name="Marques A.C."/>
            <person name="Graves T."/>
            <person name="Zhou S."/>
            <person name="Teague B."/>
            <person name="Potamousis K."/>
            <person name="Churas C."/>
            <person name="Place M."/>
            <person name="Herschleb J."/>
            <person name="Runnheim R."/>
            <person name="Forrest D."/>
            <person name="Amos-Landgraf J."/>
            <person name="Schwartz D.C."/>
            <person name="Cheng Z."/>
            <person name="Lindblad-Toh K."/>
            <person name="Eichler E.E."/>
            <person name="Ponting C.P."/>
        </authorList>
    </citation>
    <scope>NUCLEOTIDE SEQUENCE [LARGE SCALE GENOMIC DNA]</scope>
    <source>
        <strain>C57BL/6J</strain>
    </source>
</reference>
<reference key="4">
    <citation type="submission" date="2005-07" db="EMBL/GenBank/DDBJ databases">
        <authorList>
            <person name="Mural R.J."/>
            <person name="Adams M.D."/>
            <person name="Myers E.W."/>
            <person name="Smith H.O."/>
            <person name="Venter J.C."/>
        </authorList>
    </citation>
    <scope>NUCLEOTIDE SEQUENCE [LARGE SCALE GENOMIC DNA]</scope>
</reference>
<reference key="5">
    <citation type="journal article" date="2004" name="Genome Res.">
        <title>The status, quality, and expansion of the NIH full-length cDNA project: the Mammalian Gene Collection (MGC).</title>
        <authorList>
            <consortium name="The MGC Project Team"/>
        </authorList>
    </citation>
    <scope>NUCLEOTIDE SEQUENCE [LARGE SCALE MRNA]</scope>
    <source>
        <tissue>Brain</tissue>
    </source>
</reference>
<feature type="chain" id="PRO_0000127207" description="Transcription factor HES-2">
    <location>
        <begin position="1"/>
        <end position="157"/>
    </location>
</feature>
<feature type="domain" description="bHLH" evidence="3">
    <location>
        <begin position="13"/>
        <end position="70"/>
    </location>
</feature>
<feature type="domain" description="Orange" evidence="2">
    <location>
        <begin position="86"/>
        <end position="119"/>
    </location>
</feature>
<feature type="region of interest" description="Disordered" evidence="4">
    <location>
        <begin position="124"/>
        <end position="157"/>
    </location>
</feature>
<feature type="short sequence motif" description="WRPW motif">
    <location>
        <begin position="154"/>
        <end position="157"/>
    </location>
</feature>
<feature type="compositionally biased region" description="Pro residues" evidence="4">
    <location>
        <begin position="132"/>
        <end position="149"/>
    </location>
</feature>
<feature type="sequence conflict" description="In Ref. 1; BAA24091." evidence="5" ref="1">
    <original>EL</original>
    <variation>DV</variation>
    <location>
        <begin position="12"/>
        <end position="13"/>
    </location>
</feature>